<evidence type="ECO:0000256" key="1">
    <source>
        <dbReference type="SAM" id="MobiDB-lite"/>
    </source>
</evidence>
<evidence type="ECO:0000305" key="2"/>
<name>Y1945_MYCBO</name>
<accession>P67223</accession>
<accession>A0A1R3XZQ2</accession>
<accession>O07723</accession>
<accession>X2BJG2</accession>
<protein>
    <recommendedName>
        <fullName>UPF0098 protein Mb1945c</fullName>
    </recommendedName>
</protein>
<dbReference type="EMBL" id="LT708304">
    <property type="protein sequence ID" value="SIU00548.1"/>
    <property type="status" value="ALT_INIT"/>
    <property type="molecule type" value="Genomic_DNA"/>
</dbReference>
<dbReference type="RefSeq" id="NP_855596.1">
    <property type="nucleotide sequence ID" value="NC_002945.3"/>
</dbReference>
<dbReference type="SMR" id="P67223"/>
<dbReference type="KEGG" id="mbo:BQ2027_MB1945C"/>
<dbReference type="PATRIC" id="fig|233413.5.peg.2134"/>
<dbReference type="Proteomes" id="UP000001419">
    <property type="component" value="Chromosome"/>
</dbReference>
<dbReference type="CDD" id="cd00865">
    <property type="entry name" value="PEBP_bact_arch"/>
    <property type="match status" value="1"/>
</dbReference>
<dbReference type="FunFam" id="3.90.280.10:FF:000008">
    <property type="entry name" value="Probable lipoprotein lppC"/>
    <property type="match status" value="1"/>
</dbReference>
<dbReference type="Gene3D" id="3.90.280.10">
    <property type="entry name" value="PEBP-like"/>
    <property type="match status" value="1"/>
</dbReference>
<dbReference type="InterPro" id="IPR008914">
    <property type="entry name" value="PEBP"/>
</dbReference>
<dbReference type="InterPro" id="IPR036610">
    <property type="entry name" value="PEBP-like_sf"/>
</dbReference>
<dbReference type="InterPro" id="IPR005247">
    <property type="entry name" value="YbhB_YbcL/LppC-like"/>
</dbReference>
<dbReference type="PANTHER" id="PTHR30289:SF1">
    <property type="entry name" value="PEBP (PHOSPHATIDYLETHANOLAMINE-BINDING PROTEIN) FAMILY PROTEIN"/>
    <property type="match status" value="1"/>
</dbReference>
<dbReference type="PANTHER" id="PTHR30289">
    <property type="entry name" value="UNCHARACTERIZED PROTEIN YBCL-RELATED"/>
    <property type="match status" value="1"/>
</dbReference>
<dbReference type="Pfam" id="PF01161">
    <property type="entry name" value="PBP"/>
    <property type="match status" value="1"/>
</dbReference>
<dbReference type="SUPFAM" id="SSF49777">
    <property type="entry name" value="PEBP-like"/>
    <property type="match status" value="1"/>
</dbReference>
<sequence length="201" mass="20298">MESTVAHAFHRFALAILGLALPVALVAYGGNGDSRKAAPLAPKAAALGRSMPETPTGDVLTISSPAFADGAPIPEQYTCKGANIAPPLTWSAPFGGALVVDDPDAPREPYVHWIVIGIAPGAGSTADGETPGGGISLPNSSGQPAYTGPCPPAGTGTHHYRFTLYHLPAVPPLAGLAGTQAARVIAQAATMQARLIGTYEG</sequence>
<reference key="1">
    <citation type="journal article" date="2003" name="Proc. Natl. Acad. Sci. U.S.A.">
        <title>The complete genome sequence of Mycobacterium bovis.</title>
        <authorList>
            <person name="Garnier T."/>
            <person name="Eiglmeier K."/>
            <person name="Camus J.-C."/>
            <person name="Medina N."/>
            <person name="Mansoor H."/>
            <person name="Pryor M."/>
            <person name="Duthoy S."/>
            <person name="Grondin S."/>
            <person name="Lacroix C."/>
            <person name="Monsempe C."/>
            <person name="Simon S."/>
            <person name="Harris B."/>
            <person name="Atkin R."/>
            <person name="Doggett J."/>
            <person name="Mayes R."/>
            <person name="Keating L."/>
            <person name="Wheeler P.R."/>
            <person name="Parkhill J."/>
            <person name="Barrell B.G."/>
            <person name="Cole S.T."/>
            <person name="Gordon S.V."/>
            <person name="Hewinson R.G."/>
        </authorList>
    </citation>
    <scope>NUCLEOTIDE SEQUENCE [LARGE SCALE GENOMIC DNA]</scope>
    <source>
        <strain>ATCC BAA-935 / AF2122/97</strain>
    </source>
</reference>
<reference key="2">
    <citation type="journal article" date="2017" name="Genome Announc.">
        <title>Updated reference genome sequence and annotation of Mycobacterium bovis AF2122/97.</title>
        <authorList>
            <person name="Malone K.M."/>
            <person name="Farrell D."/>
            <person name="Stuber T.P."/>
            <person name="Schubert O.T."/>
            <person name="Aebersold R."/>
            <person name="Robbe-Austerman S."/>
            <person name="Gordon S.V."/>
        </authorList>
    </citation>
    <scope>NUCLEOTIDE SEQUENCE [LARGE SCALE GENOMIC DNA]</scope>
    <scope>GENOME REANNOTATION</scope>
    <source>
        <strain>ATCC BAA-935 / AF2122/97</strain>
    </source>
</reference>
<feature type="chain" id="PRO_0000137906" description="UPF0098 protein Mb1945c">
    <location>
        <begin position="1"/>
        <end position="201"/>
    </location>
</feature>
<feature type="region of interest" description="Disordered" evidence="1">
    <location>
        <begin position="125"/>
        <end position="146"/>
    </location>
</feature>
<comment type="similarity">
    <text evidence="2">Belongs to the UPF0098 family.</text>
</comment>
<comment type="sequence caution" evidence="2">
    <conflict type="erroneous initiation">
        <sequence resource="EMBL-CDS" id="SIU00548"/>
    </conflict>
    <text>Truncated N-terminus.</text>
</comment>
<keyword id="KW-1185">Reference proteome</keyword>
<gene>
    <name type="ordered locus">BQ2027_MB1945C</name>
</gene>
<organism>
    <name type="scientific">Mycobacterium bovis (strain ATCC BAA-935 / AF2122/97)</name>
    <dbReference type="NCBI Taxonomy" id="233413"/>
    <lineage>
        <taxon>Bacteria</taxon>
        <taxon>Bacillati</taxon>
        <taxon>Actinomycetota</taxon>
        <taxon>Actinomycetes</taxon>
        <taxon>Mycobacteriales</taxon>
        <taxon>Mycobacteriaceae</taxon>
        <taxon>Mycobacterium</taxon>
        <taxon>Mycobacterium tuberculosis complex</taxon>
    </lineage>
</organism>
<proteinExistence type="inferred from homology"/>